<keyword id="KW-1185">Reference proteome</keyword>
<keyword id="KW-0687">Ribonucleoprotein</keyword>
<keyword id="KW-0689">Ribosomal protein</keyword>
<evidence type="ECO:0000255" key="1">
    <source>
        <dbReference type="HAMAP-Rule" id="MF_00291"/>
    </source>
</evidence>
<evidence type="ECO:0000305" key="2"/>
<dbReference type="EMBL" id="CP001022">
    <property type="protein sequence ID" value="ACB61303.1"/>
    <property type="molecule type" value="Genomic_DNA"/>
</dbReference>
<dbReference type="RefSeq" id="WP_012370721.1">
    <property type="nucleotide sequence ID" value="NC_010556.1"/>
</dbReference>
<dbReference type="SMR" id="B1YI76"/>
<dbReference type="STRING" id="262543.Exig_1851"/>
<dbReference type="GeneID" id="90837111"/>
<dbReference type="KEGG" id="esi:Exig_1851"/>
<dbReference type="eggNOG" id="COG0052">
    <property type="taxonomic scope" value="Bacteria"/>
</dbReference>
<dbReference type="HOGENOM" id="CLU_040318_1_2_9"/>
<dbReference type="OrthoDB" id="9808036at2"/>
<dbReference type="Proteomes" id="UP000001681">
    <property type="component" value="Chromosome"/>
</dbReference>
<dbReference type="GO" id="GO:0022627">
    <property type="term" value="C:cytosolic small ribosomal subunit"/>
    <property type="evidence" value="ECO:0007669"/>
    <property type="project" value="TreeGrafter"/>
</dbReference>
<dbReference type="GO" id="GO:0003735">
    <property type="term" value="F:structural constituent of ribosome"/>
    <property type="evidence" value="ECO:0007669"/>
    <property type="project" value="InterPro"/>
</dbReference>
<dbReference type="GO" id="GO:0006412">
    <property type="term" value="P:translation"/>
    <property type="evidence" value="ECO:0007669"/>
    <property type="project" value="UniProtKB-UniRule"/>
</dbReference>
<dbReference type="CDD" id="cd01425">
    <property type="entry name" value="RPS2"/>
    <property type="match status" value="1"/>
</dbReference>
<dbReference type="FunFam" id="1.10.287.610:FF:000001">
    <property type="entry name" value="30S ribosomal protein S2"/>
    <property type="match status" value="1"/>
</dbReference>
<dbReference type="Gene3D" id="3.40.50.10490">
    <property type="entry name" value="Glucose-6-phosphate isomerase like protein, domain 1"/>
    <property type="match status" value="1"/>
</dbReference>
<dbReference type="Gene3D" id="1.10.287.610">
    <property type="entry name" value="Helix hairpin bin"/>
    <property type="match status" value="1"/>
</dbReference>
<dbReference type="HAMAP" id="MF_00291_B">
    <property type="entry name" value="Ribosomal_uS2_B"/>
    <property type="match status" value="1"/>
</dbReference>
<dbReference type="InterPro" id="IPR001865">
    <property type="entry name" value="Ribosomal_uS2"/>
</dbReference>
<dbReference type="InterPro" id="IPR005706">
    <property type="entry name" value="Ribosomal_uS2_bac/mit/plastid"/>
</dbReference>
<dbReference type="InterPro" id="IPR018130">
    <property type="entry name" value="Ribosomal_uS2_CS"/>
</dbReference>
<dbReference type="InterPro" id="IPR023591">
    <property type="entry name" value="Ribosomal_uS2_flav_dom_sf"/>
</dbReference>
<dbReference type="NCBIfam" id="TIGR01011">
    <property type="entry name" value="rpsB_bact"/>
    <property type="match status" value="1"/>
</dbReference>
<dbReference type="PANTHER" id="PTHR12534">
    <property type="entry name" value="30S RIBOSOMAL PROTEIN S2 PROKARYOTIC AND ORGANELLAR"/>
    <property type="match status" value="1"/>
</dbReference>
<dbReference type="PANTHER" id="PTHR12534:SF0">
    <property type="entry name" value="SMALL RIBOSOMAL SUBUNIT PROTEIN US2M"/>
    <property type="match status" value="1"/>
</dbReference>
<dbReference type="Pfam" id="PF00318">
    <property type="entry name" value="Ribosomal_S2"/>
    <property type="match status" value="1"/>
</dbReference>
<dbReference type="PRINTS" id="PR00395">
    <property type="entry name" value="RIBOSOMALS2"/>
</dbReference>
<dbReference type="SUPFAM" id="SSF52313">
    <property type="entry name" value="Ribosomal protein S2"/>
    <property type="match status" value="1"/>
</dbReference>
<dbReference type="PROSITE" id="PS00962">
    <property type="entry name" value="RIBOSOMAL_S2_1"/>
    <property type="match status" value="1"/>
</dbReference>
<dbReference type="PROSITE" id="PS00963">
    <property type="entry name" value="RIBOSOMAL_S2_2"/>
    <property type="match status" value="1"/>
</dbReference>
<accession>B1YI76</accession>
<feature type="chain" id="PRO_1000115021" description="Small ribosomal subunit protein uS2">
    <location>
        <begin position="1"/>
        <end position="244"/>
    </location>
</feature>
<proteinExistence type="inferred from homology"/>
<gene>
    <name evidence="1" type="primary">rpsB</name>
    <name type="ordered locus">Exig_1851</name>
</gene>
<name>RS2_EXIS2</name>
<reference key="1">
    <citation type="submission" date="2008-04" db="EMBL/GenBank/DDBJ databases">
        <title>Complete sequence of chromosome of Exiguobacterium sibiricum 255-15.</title>
        <authorList>
            <consortium name="US DOE Joint Genome Institute"/>
            <person name="Copeland A."/>
            <person name="Lucas S."/>
            <person name="Lapidus A."/>
            <person name="Glavina del Rio T."/>
            <person name="Dalin E."/>
            <person name="Tice H."/>
            <person name="Bruce D."/>
            <person name="Goodwin L."/>
            <person name="Pitluck S."/>
            <person name="Kiss H."/>
            <person name="Chertkov O."/>
            <person name="Monk C."/>
            <person name="Brettin T."/>
            <person name="Detter J.C."/>
            <person name="Han C."/>
            <person name="Kuske C.R."/>
            <person name="Schmutz J."/>
            <person name="Larimer F."/>
            <person name="Land M."/>
            <person name="Hauser L."/>
            <person name="Kyrpides N."/>
            <person name="Mikhailova N."/>
            <person name="Vishnivetskaya T."/>
            <person name="Rodrigues D.F."/>
            <person name="Gilichinsky D."/>
            <person name="Tiedje J."/>
            <person name="Richardson P."/>
        </authorList>
    </citation>
    <scope>NUCLEOTIDE SEQUENCE [LARGE SCALE GENOMIC DNA]</scope>
    <source>
        <strain>DSM 17290 / CCUG 55495 / CIP 109462 / JCM 13490 / 255-15</strain>
    </source>
</reference>
<protein>
    <recommendedName>
        <fullName evidence="1">Small ribosomal subunit protein uS2</fullName>
    </recommendedName>
    <alternativeName>
        <fullName evidence="2">30S ribosomal protein S2</fullName>
    </alternativeName>
</protein>
<comment type="similarity">
    <text evidence="1">Belongs to the universal ribosomal protein uS2 family.</text>
</comment>
<organism>
    <name type="scientific">Exiguobacterium sibiricum (strain DSM 17290 / CCUG 55495 / CIP 109462 / JCM 13490 / 255-15)</name>
    <dbReference type="NCBI Taxonomy" id="262543"/>
    <lineage>
        <taxon>Bacteria</taxon>
        <taxon>Bacillati</taxon>
        <taxon>Bacillota</taxon>
        <taxon>Bacilli</taxon>
        <taxon>Bacillales</taxon>
        <taxon>Bacillales Family XII. Incertae Sedis</taxon>
        <taxon>Exiguobacterium</taxon>
    </lineage>
</organism>
<sequence length="244" mass="27542">MAVISMKQLLEAGVHFGHQTRRWNPKMAKYIFTERNGIYIIDLQKTVKKVDEAYNFIREVASEGGNVLFVGTKKQAQDTVKEEAIRAGQYFINERWLGGTLTNFSTIKKRINRLKQLEKMEENGTFEVLPKKEVIILKKEMTRLEKFLGGIKDMPGVPDALFIVDPRKERIAIAEAHKLNIPIVAIVDTNCDPDEIDYVIPANDDAIRAVKLLTGKMADAILEVKQGEDNVAPETTEEVVADAE</sequence>